<name>BIOD_XANE5</name>
<protein>
    <recommendedName>
        <fullName evidence="1">ATP-dependent dethiobiotin synthetase BioD</fullName>
        <ecNumber evidence="1">6.3.3.3</ecNumber>
    </recommendedName>
    <alternativeName>
        <fullName evidence="1">DTB synthetase</fullName>
        <shortName evidence="1">DTBS</shortName>
    </alternativeName>
    <alternativeName>
        <fullName evidence="1">Dethiobiotin synthase</fullName>
    </alternativeName>
</protein>
<gene>
    <name evidence="1" type="primary">bioD</name>
    <name type="ordered locus">XCV3736</name>
</gene>
<accession>Q3BP46</accession>
<organism>
    <name type="scientific">Xanthomonas euvesicatoria pv. vesicatoria (strain 85-10)</name>
    <name type="common">Xanthomonas campestris pv. vesicatoria</name>
    <dbReference type="NCBI Taxonomy" id="316273"/>
    <lineage>
        <taxon>Bacteria</taxon>
        <taxon>Pseudomonadati</taxon>
        <taxon>Pseudomonadota</taxon>
        <taxon>Gammaproteobacteria</taxon>
        <taxon>Lysobacterales</taxon>
        <taxon>Lysobacteraceae</taxon>
        <taxon>Xanthomonas</taxon>
    </lineage>
</organism>
<dbReference type="EC" id="6.3.3.3" evidence="1"/>
<dbReference type="EMBL" id="AM039952">
    <property type="protein sequence ID" value="CAJ25467.1"/>
    <property type="molecule type" value="Genomic_DNA"/>
</dbReference>
<dbReference type="RefSeq" id="WP_011348633.1">
    <property type="nucleotide sequence ID" value="NZ_CP017190.1"/>
</dbReference>
<dbReference type="SMR" id="Q3BP46"/>
<dbReference type="STRING" id="456327.BJD11_03985"/>
<dbReference type="KEGG" id="xcv:XCV3736"/>
<dbReference type="eggNOG" id="COG0132">
    <property type="taxonomic scope" value="Bacteria"/>
</dbReference>
<dbReference type="HOGENOM" id="CLU_072551_0_0_6"/>
<dbReference type="UniPathway" id="UPA00078">
    <property type="reaction ID" value="UER00161"/>
</dbReference>
<dbReference type="Proteomes" id="UP000007069">
    <property type="component" value="Chromosome"/>
</dbReference>
<dbReference type="GO" id="GO:0005829">
    <property type="term" value="C:cytosol"/>
    <property type="evidence" value="ECO:0007669"/>
    <property type="project" value="TreeGrafter"/>
</dbReference>
<dbReference type="GO" id="GO:0005524">
    <property type="term" value="F:ATP binding"/>
    <property type="evidence" value="ECO:0007669"/>
    <property type="project" value="UniProtKB-UniRule"/>
</dbReference>
<dbReference type="GO" id="GO:0004141">
    <property type="term" value="F:dethiobiotin synthase activity"/>
    <property type="evidence" value="ECO:0007669"/>
    <property type="project" value="UniProtKB-UniRule"/>
</dbReference>
<dbReference type="GO" id="GO:0000287">
    <property type="term" value="F:magnesium ion binding"/>
    <property type="evidence" value="ECO:0007669"/>
    <property type="project" value="UniProtKB-UniRule"/>
</dbReference>
<dbReference type="GO" id="GO:0009102">
    <property type="term" value="P:biotin biosynthetic process"/>
    <property type="evidence" value="ECO:0007669"/>
    <property type="project" value="UniProtKB-UniRule"/>
</dbReference>
<dbReference type="CDD" id="cd03109">
    <property type="entry name" value="DTBS"/>
    <property type="match status" value="1"/>
</dbReference>
<dbReference type="FunFam" id="3.40.50.300:FF:000292">
    <property type="entry name" value="ATP-dependent dethiobiotin synthetase BioD"/>
    <property type="match status" value="1"/>
</dbReference>
<dbReference type="Gene3D" id="3.40.50.300">
    <property type="entry name" value="P-loop containing nucleotide triphosphate hydrolases"/>
    <property type="match status" value="1"/>
</dbReference>
<dbReference type="HAMAP" id="MF_00336">
    <property type="entry name" value="BioD"/>
    <property type="match status" value="1"/>
</dbReference>
<dbReference type="InterPro" id="IPR004472">
    <property type="entry name" value="DTB_synth_BioD"/>
</dbReference>
<dbReference type="InterPro" id="IPR027417">
    <property type="entry name" value="P-loop_NTPase"/>
</dbReference>
<dbReference type="NCBIfam" id="TIGR00347">
    <property type="entry name" value="bioD"/>
    <property type="match status" value="1"/>
</dbReference>
<dbReference type="PANTHER" id="PTHR43210">
    <property type="entry name" value="DETHIOBIOTIN SYNTHETASE"/>
    <property type="match status" value="1"/>
</dbReference>
<dbReference type="PANTHER" id="PTHR43210:SF5">
    <property type="entry name" value="DETHIOBIOTIN SYNTHETASE"/>
    <property type="match status" value="1"/>
</dbReference>
<dbReference type="Pfam" id="PF13500">
    <property type="entry name" value="AAA_26"/>
    <property type="match status" value="1"/>
</dbReference>
<dbReference type="PIRSF" id="PIRSF006755">
    <property type="entry name" value="DTB_synth"/>
    <property type="match status" value="1"/>
</dbReference>
<dbReference type="SUPFAM" id="SSF52540">
    <property type="entry name" value="P-loop containing nucleoside triphosphate hydrolases"/>
    <property type="match status" value="1"/>
</dbReference>
<evidence type="ECO:0000255" key="1">
    <source>
        <dbReference type="HAMAP-Rule" id="MF_00336"/>
    </source>
</evidence>
<comment type="function">
    <text evidence="1">Catalyzes a mechanistically unusual reaction, the ATP-dependent insertion of CO2 between the N7 and N8 nitrogen atoms of 7,8-diaminopelargonic acid (DAPA, also called 7,8-diammoniononanoate) to form a ureido ring.</text>
</comment>
<comment type="catalytic activity">
    <reaction evidence="1">
        <text>(7R,8S)-7,8-diammoniononanoate + CO2 + ATP = (4R,5S)-dethiobiotin + ADP + phosphate + 3 H(+)</text>
        <dbReference type="Rhea" id="RHEA:15805"/>
        <dbReference type="ChEBI" id="CHEBI:15378"/>
        <dbReference type="ChEBI" id="CHEBI:16526"/>
        <dbReference type="ChEBI" id="CHEBI:30616"/>
        <dbReference type="ChEBI" id="CHEBI:43474"/>
        <dbReference type="ChEBI" id="CHEBI:149469"/>
        <dbReference type="ChEBI" id="CHEBI:149473"/>
        <dbReference type="ChEBI" id="CHEBI:456216"/>
        <dbReference type="EC" id="6.3.3.3"/>
    </reaction>
</comment>
<comment type="cofactor">
    <cofactor evidence="1">
        <name>Mg(2+)</name>
        <dbReference type="ChEBI" id="CHEBI:18420"/>
    </cofactor>
</comment>
<comment type="pathway">
    <text evidence="1">Cofactor biosynthesis; biotin biosynthesis; biotin from 7,8-diaminononanoate: step 1/2.</text>
</comment>
<comment type="subunit">
    <text evidence="1">Homodimer.</text>
</comment>
<comment type="subcellular location">
    <subcellularLocation>
        <location evidence="1">Cytoplasm</location>
    </subcellularLocation>
</comment>
<comment type="similarity">
    <text evidence="1">Belongs to the dethiobiotin synthetase family.</text>
</comment>
<sequence>MQHPAFYVTGTDTGIGKTMGSTALLHALRARGHRAVGMKPVASGCEHTPQGWRNEDALALQAASDPQPDYATLNPYALPAPLAPELAAADVGVTLALEPIAHAFAQLLTQAEVVVVEGVGGWAAPLSATLDQADLVRALQLPVVLVVGVRLGCINHARLTAAAIAADGLQCIGWIANEIDPQMERIEENIGMLRQRLAMPCWGRIPWRPGADAAAQAHGLQLPR</sequence>
<reference key="1">
    <citation type="journal article" date="2005" name="J. Bacteriol.">
        <title>Insights into genome plasticity and pathogenicity of the plant pathogenic Bacterium Xanthomonas campestris pv. vesicatoria revealed by the complete genome sequence.</title>
        <authorList>
            <person name="Thieme F."/>
            <person name="Koebnik R."/>
            <person name="Bekel T."/>
            <person name="Berger C."/>
            <person name="Boch J."/>
            <person name="Buettner D."/>
            <person name="Caldana C."/>
            <person name="Gaigalat L."/>
            <person name="Goesmann A."/>
            <person name="Kay S."/>
            <person name="Kirchner O."/>
            <person name="Lanz C."/>
            <person name="Linke B."/>
            <person name="McHardy A.C."/>
            <person name="Meyer F."/>
            <person name="Mittenhuber G."/>
            <person name="Nies D.H."/>
            <person name="Niesbach-Kloesgen U."/>
            <person name="Patschkowski T."/>
            <person name="Rueckert C."/>
            <person name="Rupp O."/>
            <person name="Schneiker S."/>
            <person name="Schuster S.C."/>
            <person name="Vorhoelter F.J."/>
            <person name="Weber E."/>
            <person name="Puehler A."/>
            <person name="Bonas U."/>
            <person name="Bartels D."/>
            <person name="Kaiser O."/>
        </authorList>
    </citation>
    <scope>NUCLEOTIDE SEQUENCE [LARGE SCALE GENOMIC DNA]</scope>
    <source>
        <strain>85-10</strain>
    </source>
</reference>
<proteinExistence type="inferred from homology"/>
<feature type="chain" id="PRO_0000302555" description="ATP-dependent dethiobiotin synthetase BioD">
    <location>
        <begin position="1"/>
        <end position="224"/>
    </location>
</feature>
<feature type="active site" evidence="1">
    <location>
        <position position="39"/>
    </location>
</feature>
<feature type="binding site" evidence="1">
    <location>
        <position position="18"/>
    </location>
    <ligand>
        <name>Mg(2+)</name>
        <dbReference type="ChEBI" id="CHEBI:18420"/>
    </ligand>
</feature>
<feature type="binding site" evidence="1">
    <location>
        <position position="43"/>
    </location>
    <ligand>
        <name>substrate</name>
    </ligand>
</feature>
<feature type="binding site" evidence="1">
    <location>
        <position position="56"/>
    </location>
    <ligand>
        <name>ATP</name>
        <dbReference type="ChEBI" id="CHEBI:30616"/>
    </ligand>
</feature>
<feature type="binding site" evidence="1">
    <location>
        <position position="56"/>
    </location>
    <ligand>
        <name>Mg(2+)</name>
        <dbReference type="ChEBI" id="CHEBI:18420"/>
    </ligand>
</feature>
<feature type="binding site" evidence="1">
    <location>
        <begin position="117"/>
        <end position="120"/>
    </location>
    <ligand>
        <name>ATP</name>
        <dbReference type="ChEBI" id="CHEBI:30616"/>
    </ligand>
</feature>
<feature type="binding site" evidence="1">
    <location>
        <position position="117"/>
    </location>
    <ligand>
        <name>Mg(2+)</name>
        <dbReference type="ChEBI" id="CHEBI:18420"/>
    </ligand>
</feature>
<feature type="binding site" evidence="1">
    <location>
        <begin position="177"/>
        <end position="178"/>
    </location>
    <ligand>
        <name>ATP</name>
        <dbReference type="ChEBI" id="CHEBI:30616"/>
    </ligand>
</feature>
<keyword id="KW-0067">ATP-binding</keyword>
<keyword id="KW-0093">Biotin biosynthesis</keyword>
<keyword id="KW-0963">Cytoplasm</keyword>
<keyword id="KW-0436">Ligase</keyword>
<keyword id="KW-0460">Magnesium</keyword>
<keyword id="KW-0479">Metal-binding</keyword>
<keyword id="KW-0547">Nucleotide-binding</keyword>